<dbReference type="EMBL" id="BA000022">
    <property type="protein sequence ID" value="BAA18618.1"/>
    <property type="molecule type" value="Genomic_DNA"/>
</dbReference>
<dbReference type="PIR" id="S76489">
    <property type="entry name" value="S76489"/>
</dbReference>
<dbReference type="SMR" id="P74514"/>
<dbReference type="FunCoup" id="P74514">
    <property type="interactions" value="444"/>
</dbReference>
<dbReference type="IntAct" id="P74514">
    <property type="interactions" value="1"/>
</dbReference>
<dbReference type="STRING" id="1148.gene:10499501"/>
<dbReference type="PaxDb" id="1148-1653706"/>
<dbReference type="EnsemblBacteria" id="BAA18618">
    <property type="protein sequence ID" value="BAA18618"/>
    <property type="gene ID" value="BAA18618"/>
</dbReference>
<dbReference type="KEGG" id="syn:slr0989"/>
<dbReference type="eggNOG" id="COG0217">
    <property type="taxonomic scope" value="Bacteria"/>
</dbReference>
<dbReference type="InParanoid" id="P74514"/>
<dbReference type="PhylomeDB" id="P74514"/>
<dbReference type="Proteomes" id="UP000001425">
    <property type="component" value="Chromosome"/>
</dbReference>
<dbReference type="GO" id="GO:0005829">
    <property type="term" value="C:cytosol"/>
    <property type="evidence" value="ECO:0000318"/>
    <property type="project" value="GO_Central"/>
</dbReference>
<dbReference type="GO" id="GO:0003677">
    <property type="term" value="F:DNA binding"/>
    <property type="evidence" value="ECO:0007669"/>
    <property type="project" value="UniProtKB-UniRule"/>
</dbReference>
<dbReference type="GO" id="GO:0006355">
    <property type="term" value="P:regulation of DNA-templated transcription"/>
    <property type="evidence" value="ECO:0007669"/>
    <property type="project" value="UniProtKB-UniRule"/>
</dbReference>
<dbReference type="FunFam" id="1.10.10.200:FF:000002">
    <property type="entry name" value="Probable transcriptional regulatory protein CLM62_37755"/>
    <property type="match status" value="1"/>
</dbReference>
<dbReference type="Gene3D" id="1.10.10.200">
    <property type="match status" value="1"/>
</dbReference>
<dbReference type="Gene3D" id="3.30.70.980">
    <property type="match status" value="2"/>
</dbReference>
<dbReference type="HAMAP" id="MF_00693">
    <property type="entry name" value="Transcrip_reg_TACO1"/>
    <property type="match status" value="1"/>
</dbReference>
<dbReference type="InterPro" id="IPR017856">
    <property type="entry name" value="Integrase-like_N"/>
</dbReference>
<dbReference type="InterPro" id="IPR048300">
    <property type="entry name" value="TACO1_YebC-like_2nd/3rd_dom"/>
</dbReference>
<dbReference type="InterPro" id="IPR049083">
    <property type="entry name" value="TACO1_YebC_N"/>
</dbReference>
<dbReference type="InterPro" id="IPR002876">
    <property type="entry name" value="Transcrip_reg_TACO1-like"/>
</dbReference>
<dbReference type="InterPro" id="IPR026564">
    <property type="entry name" value="Transcrip_reg_TACO1-like_dom3"/>
</dbReference>
<dbReference type="InterPro" id="IPR029072">
    <property type="entry name" value="YebC-like"/>
</dbReference>
<dbReference type="NCBIfam" id="NF001030">
    <property type="entry name" value="PRK00110.1"/>
    <property type="match status" value="1"/>
</dbReference>
<dbReference type="NCBIfam" id="NF009044">
    <property type="entry name" value="PRK12378.1"/>
    <property type="match status" value="1"/>
</dbReference>
<dbReference type="NCBIfam" id="TIGR01033">
    <property type="entry name" value="YebC/PmpR family DNA-binding transcriptional regulator"/>
    <property type="match status" value="1"/>
</dbReference>
<dbReference type="PANTHER" id="PTHR12532:SF6">
    <property type="entry name" value="TRANSCRIPTIONAL REGULATORY PROTEIN YEBC-RELATED"/>
    <property type="match status" value="1"/>
</dbReference>
<dbReference type="PANTHER" id="PTHR12532">
    <property type="entry name" value="TRANSLATIONAL ACTIVATOR OF CYTOCHROME C OXIDASE 1"/>
    <property type="match status" value="1"/>
</dbReference>
<dbReference type="Pfam" id="PF20772">
    <property type="entry name" value="TACO1_YebC_N"/>
    <property type="match status" value="1"/>
</dbReference>
<dbReference type="Pfam" id="PF01709">
    <property type="entry name" value="Transcrip_reg"/>
    <property type="match status" value="1"/>
</dbReference>
<dbReference type="SUPFAM" id="SSF75625">
    <property type="entry name" value="YebC-like"/>
    <property type="match status" value="1"/>
</dbReference>
<organism>
    <name type="scientific">Synechocystis sp. (strain ATCC 27184 / PCC 6803 / Kazusa)</name>
    <dbReference type="NCBI Taxonomy" id="1111708"/>
    <lineage>
        <taxon>Bacteria</taxon>
        <taxon>Bacillati</taxon>
        <taxon>Cyanobacteriota</taxon>
        <taxon>Cyanophyceae</taxon>
        <taxon>Synechococcales</taxon>
        <taxon>Merismopediaceae</taxon>
        <taxon>Synechocystis</taxon>
    </lineage>
</organism>
<keyword id="KW-0963">Cytoplasm</keyword>
<keyword id="KW-0238">DNA-binding</keyword>
<keyword id="KW-1185">Reference proteome</keyword>
<keyword id="KW-0804">Transcription</keyword>
<keyword id="KW-0805">Transcription regulation</keyword>
<evidence type="ECO:0000255" key="1">
    <source>
        <dbReference type="HAMAP-Rule" id="MF_00693"/>
    </source>
</evidence>
<evidence type="ECO:0000256" key="2">
    <source>
        <dbReference type="SAM" id="MobiDB-lite"/>
    </source>
</evidence>
<name>Y989_SYNY3</name>
<accession>P74514</accession>
<sequence length="253" mass="27621">MGGRKWQSIKRQKARVDAQKGKTTTQLSRAIIVAARQGIPDPAGNFQLRTAIEKARAAGVPNDSIDRAIAKGAGTYEDGESNYEEMRYEGYGPGGVAVLIEALTDNRNRTAADLRAAFSKKGGNLGETGCVSWMFSQKGVIRLVGELEEEKLLEALLEGEGESYEWLDEEDGGGVEVFSAVNQLENLNQVLQNHGFTIAETELRWLPENTIEIAEPDQAKALMQMIDTLESLDDVQSVTSNFELTEELLALAG</sequence>
<feature type="chain" id="PRO_0000175916" description="Probable transcriptional regulatory protein slr0989">
    <location>
        <begin position="1"/>
        <end position="253"/>
    </location>
</feature>
<feature type="region of interest" description="Disordered" evidence="2">
    <location>
        <begin position="1"/>
        <end position="22"/>
    </location>
</feature>
<reference key="1">
    <citation type="journal article" date="1996" name="DNA Res.">
        <title>Sequence analysis of the genome of the unicellular cyanobacterium Synechocystis sp. strain PCC6803. II. Sequence determination of the entire genome and assignment of potential protein-coding regions.</title>
        <authorList>
            <person name="Kaneko T."/>
            <person name="Sato S."/>
            <person name="Kotani H."/>
            <person name="Tanaka A."/>
            <person name="Asamizu E."/>
            <person name="Nakamura Y."/>
            <person name="Miyajima N."/>
            <person name="Hirosawa M."/>
            <person name="Sugiura M."/>
            <person name="Sasamoto S."/>
            <person name="Kimura T."/>
            <person name="Hosouchi T."/>
            <person name="Matsuno A."/>
            <person name="Muraki A."/>
            <person name="Nakazaki N."/>
            <person name="Naruo K."/>
            <person name="Okumura S."/>
            <person name="Shimpo S."/>
            <person name="Takeuchi C."/>
            <person name="Wada T."/>
            <person name="Watanabe A."/>
            <person name="Yamada M."/>
            <person name="Yasuda M."/>
            <person name="Tabata S."/>
        </authorList>
    </citation>
    <scope>NUCLEOTIDE SEQUENCE [LARGE SCALE GENOMIC DNA]</scope>
    <source>
        <strain>ATCC 27184 / PCC 6803 / Kazusa</strain>
    </source>
</reference>
<gene>
    <name type="ordered locus">slr0989</name>
</gene>
<comment type="subcellular location">
    <subcellularLocation>
        <location evidence="1">Cytoplasm</location>
    </subcellularLocation>
</comment>
<comment type="similarity">
    <text evidence="1">Belongs to the TACO1 family.</text>
</comment>
<proteinExistence type="inferred from homology"/>
<protein>
    <recommendedName>
        <fullName evidence="1">Probable transcriptional regulatory protein slr0989</fullName>
    </recommendedName>
</protein>